<evidence type="ECO:0000255" key="1">
    <source>
        <dbReference type="HAMAP-Rule" id="MF_00201"/>
    </source>
</evidence>
<dbReference type="EMBL" id="CP000394">
    <property type="protein sequence ID" value="ABI61892.1"/>
    <property type="molecule type" value="Genomic_DNA"/>
</dbReference>
<dbReference type="RefSeq" id="WP_011631701.1">
    <property type="nucleotide sequence ID" value="NC_008343.2"/>
</dbReference>
<dbReference type="SMR" id="Q0BTG0"/>
<dbReference type="STRING" id="391165.GbCGDNIH1_0994"/>
<dbReference type="KEGG" id="gbe:GbCGDNIH1_0994"/>
<dbReference type="eggNOG" id="COG1381">
    <property type="taxonomic scope" value="Bacteria"/>
</dbReference>
<dbReference type="HOGENOM" id="CLU_086029_0_0_5"/>
<dbReference type="OrthoDB" id="9804792at2"/>
<dbReference type="Proteomes" id="UP000001963">
    <property type="component" value="Chromosome"/>
</dbReference>
<dbReference type="GO" id="GO:0043590">
    <property type="term" value="C:bacterial nucleoid"/>
    <property type="evidence" value="ECO:0007669"/>
    <property type="project" value="TreeGrafter"/>
</dbReference>
<dbReference type="GO" id="GO:0006310">
    <property type="term" value="P:DNA recombination"/>
    <property type="evidence" value="ECO:0007669"/>
    <property type="project" value="UniProtKB-UniRule"/>
</dbReference>
<dbReference type="GO" id="GO:0006302">
    <property type="term" value="P:double-strand break repair"/>
    <property type="evidence" value="ECO:0007669"/>
    <property type="project" value="TreeGrafter"/>
</dbReference>
<dbReference type="Gene3D" id="2.40.50.140">
    <property type="entry name" value="Nucleic acid-binding proteins"/>
    <property type="match status" value="1"/>
</dbReference>
<dbReference type="Gene3D" id="1.20.1440.120">
    <property type="entry name" value="Recombination protein O, C-terminal domain"/>
    <property type="match status" value="1"/>
</dbReference>
<dbReference type="HAMAP" id="MF_00201">
    <property type="entry name" value="RecO"/>
    <property type="match status" value="1"/>
</dbReference>
<dbReference type="InterPro" id="IPR037278">
    <property type="entry name" value="ARFGAP/RecO"/>
</dbReference>
<dbReference type="InterPro" id="IPR022572">
    <property type="entry name" value="DNA_rep/recomb_RecO_N"/>
</dbReference>
<dbReference type="InterPro" id="IPR012340">
    <property type="entry name" value="NA-bd_OB-fold"/>
</dbReference>
<dbReference type="InterPro" id="IPR003717">
    <property type="entry name" value="RecO"/>
</dbReference>
<dbReference type="InterPro" id="IPR042242">
    <property type="entry name" value="RecO_C"/>
</dbReference>
<dbReference type="NCBIfam" id="TIGR00613">
    <property type="entry name" value="reco"/>
    <property type="match status" value="1"/>
</dbReference>
<dbReference type="PANTHER" id="PTHR33991">
    <property type="entry name" value="DNA REPAIR PROTEIN RECO"/>
    <property type="match status" value="1"/>
</dbReference>
<dbReference type="PANTHER" id="PTHR33991:SF1">
    <property type="entry name" value="DNA REPAIR PROTEIN RECO"/>
    <property type="match status" value="1"/>
</dbReference>
<dbReference type="Pfam" id="PF02565">
    <property type="entry name" value="RecO_C"/>
    <property type="match status" value="1"/>
</dbReference>
<dbReference type="Pfam" id="PF11967">
    <property type="entry name" value="RecO_N"/>
    <property type="match status" value="1"/>
</dbReference>
<dbReference type="SUPFAM" id="SSF57863">
    <property type="entry name" value="ArfGap/RecO-like zinc finger"/>
    <property type="match status" value="1"/>
</dbReference>
<dbReference type="SUPFAM" id="SSF50249">
    <property type="entry name" value="Nucleic acid-binding proteins"/>
    <property type="match status" value="1"/>
</dbReference>
<reference key="1">
    <citation type="journal article" date="2007" name="J. Bacteriol.">
        <title>Genome sequence analysis of the emerging human pathogenic acetic acid bacterium Granulibacter bethesdensis.</title>
        <authorList>
            <person name="Greenberg D.E."/>
            <person name="Porcella S.F."/>
            <person name="Zelazny A.M."/>
            <person name="Virtaneva K."/>
            <person name="Sturdevant D.E."/>
            <person name="Kupko J.J. III"/>
            <person name="Barbian K.D."/>
            <person name="Babar A."/>
            <person name="Dorward D.W."/>
            <person name="Holland S.M."/>
        </authorList>
    </citation>
    <scope>NUCLEOTIDE SEQUENCE [LARGE SCALE GENOMIC DNA]</scope>
    <source>
        <strain>ATCC BAA-1260 / CGDNIH1</strain>
    </source>
</reference>
<feature type="chain" id="PRO_1000012130" description="DNA repair protein RecO">
    <location>
        <begin position="1"/>
        <end position="250"/>
    </location>
</feature>
<gene>
    <name evidence="1" type="primary">recO</name>
    <name type="ordered locus">GbCGDNIH1_0994</name>
</gene>
<name>RECO_GRABC</name>
<organism>
    <name type="scientific">Granulibacter bethesdensis (strain ATCC BAA-1260 / CGDNIH1)</name>
    <dbReference type="NCBI Taxonomy" id="391165"/>
    <lineage>
        <taxon>Bacteria</taxon>
        <taxon>Pseudomonadati</taxon>
        <taxon>Pseudomonadota</taxon>
        <taxon>Alphaproteobacteria</taxon>
        <taxon>Acetobacterales</taxon>
        <taxon>Acetobacteraceae</taxon>
        <taxon>Granulibacter</taxon>
    </lineage>
</organism>
<sequence length="250" mass="27225">MEWTAPCIVLSAQPYGEADCLAAVFSEDQGLYRGLVRGGTSRQRGGIWQPGNLVMARWTARLADQLGSLTAELIHPAAALAMDDPLNLAVLRSLCTVAEGALPDREAHPAAFIPLPGLLTRLSLGGGQVVEDAIRWEAILLRELGYGLDLQRCAVTGQVSGLHYVSPRTGRAVSSDAAEPWLDRLLPLPAFLLHQAETDSDPVAWRDGLRLTGYFLSRDVFGTRHRPLPPARMSLYDRIAALTETEREHA</sequence>
<keyword id="KW-0227">DNA damage</keyword>
<keyword id="KW-0233">DNA recombination</keyword>
<keyword id="KW-0234">DNA repair</keyword>
<keyword id="KW-1185">Reference proteome</keyword>
<protein>
    <recommendedName>
        <fullName evidence="1">DNA repair protein RecO</fullName>
    </recommendedName>
    <alternativeName>
        <fullName evidence="1">Recombination protein O</fullName>
    </alternativeName>
</protein>
<comment type="function">
    <text evidence="1">Involved in DNA repair and RecF pathway recombination.</text>
</comment>
<comment type="similarity">
    <text evidence="1">Belongs to the RecO family.</text>
</comment>
<proteinExistence type="inferred from homology"/>
<accession>Q0BTG0</accession>